<sequence>MGALRGRWAEEEALRFLLGKGYRLLWRNRRTPFGEVDLFMEKDGVYVVVEVKQRASARFGAPLEAITPGKVRRLLQSARFLLGRDDLPVRLEAVLVHGTPKDFRLEHLVLEL</sequence>
<proteinExistence type="inferred from homology"/>
<accession>Q5SLC1</accession>
<dbReference type="EMBL" id="AP008226">
    <property type="protein sequence ID" value="BAD70195.1"/>
    <property type="molecule type" value="Genomic_DNA"/>
</dbReference>
<dbReference type="RefSeq" id="WP_011227887.1">
    <property type="nucleotide sequence ID" value="NC_006461.1"/>
</dbReference>
<dbReference type="RefSeq" id="YP_143638.1">
    <property type="nucleotide sequence ID" value="NC_006461.1"/>
</dbReference>
<dbReference type="SMR" id="Q5SLC1"/>
<dbReference type="EnsemblBacteria" id="BAD70195">
    <property type="protein sequence ID" value="BAD70195"/>
    <property type="gene ID" value="BAD70195"/>
</dbReference>
<dbReference type="GeneID" id="3168550"/>
<dbReference type="KEGG" id="ttj:TTHA0372"/>
<dbReference type="PATRIC" id="fig|300852.9.peg.372"/>
<dbReference type="eggNOG" id="COG0792">
    <property type="taxonomic scope" value="Bacteria"/>
</dbReference>
<dbReference type="HOGENOM" id="CLU_115353_1_1_0"/>
<dbReference type="PhylomeDB" id="Q5SLC1"/>
<dbReference type="Proteomes" id="UP000000532">
    <property type="component" value="Chromosome"/>
</dbReference>
<dbReference type="GO" id="GO:0003676">
    <property type="term" value="F:nucleic acid binding"/>
    <property type="evidence" value="ECO:0007669"/>
    <property type="project" value="InterPro"/>
</dbReference>
<dbReference type="CDD" id="cd20736">
    <property type="entry name" value="PoNe_Nuclease"/>
    <property type="match status" value="1"/>
</dbReference>
<dbReference type="Gene3D" id="3.40.1350.10">
    <property type="match status" value="1"/>
</dbReference>
<dbReference type="HAMAP" id="MF_00048">
    <property type="entry name" value="UPF0102"/>
    <property type="match status" value="1"/>
</dbReference>
<dbReference type="InterPro" id="IPR011335">
    <property type="entry name" value="Restrct_endonuc-II-like"/>
</dbReference>
<dbReference type="InterPro" id="IPR011856">
    <property type="entry name" value="tRNA_endonuc-like_dom_sf"/>
</dbReference>
<dbReference type="InterPro" id="IPR003509">
    <property type="entry name" value="UPF0102_YraN-like"/>
</dbReference>
<dbReference type="PANTHER" id="PTHR34039">
    <property type="entry name" value="UPF0102 PROTEIN YRAN"/>
    <property type="match status" value="1"/>
</dbReference>
<dbReference type="PANTHER" id="PTHR34039:SF1">
    <property type="entry name" value="UPF0102 PROTEIN YRAN"/>
    <property type="match status" value="1"/>
</dbReference>
<dbReference type="Pfam" id="PF02021">
    <property type="entry name" value="UPF0102"/>
    <property type="match status" value="1"/>
</dbReference>
<dbReference type="SUPFAM" id="SSF52980">
    <property type="entry name" value="Restriction endonuclease-like"/>
    <property type="match status" value="1"/>
</dbReference>
<reference key="1">
    <citation type="submission" date="2004-11" db="EMBL/GenBank/DDBJ databases">
        <title>Complete genome sequence of Thermus thermophilus HB8.</title>
        <authorList>
            <person name="Masui R."/>
            <person name="Kurokawa K."/>
            <person name="Nakagawa N."/>
            <person name="Tokunaga F."/>
            <person name="Koyama Y."/>
            <person name="Shibata T."/>
            <person name="Oshima T."/>
            <person name="Yokoyama S."/>
            <person name="Yasunaga T."/>
            <person name="Kuramitsu S."/>
        </authorList>
    </citation>
    <scope>NUCLEOTIDE SEQUENCE [LARGE SCALE GENOMIC DNA]</scope>
    <source>
        <strain>ATCC 27634 / DSM 579 / HB8</strain>
    </source>
</reference>
<protein>
    <recommendedName>
        <fullName evidence="1">UPF0102 protein TTHA0372</fullName>
    </recommendedName>
</protein>
<organism>
    <name type="scientific">Thermus thermophilus (strain ATCC 27634 / DSM 579 / HB8)</name>
    <dbReference type="NCBI Taxonomy" id="300852"/>
    <lineage>
        <taxon>Bacteria</taxon>
        <taxon>Thermotogati</taxon>
        <taxon>Deinococcota</taxon>
        <taxon>Deinococci</taxon>
        <taxon>Thermales</taxon>
        <taxon>Thermaceae</taxon>
        <taxon>Thermus</taxon>
    </lineage>
</organism>
<feature type="chain" id="PRO_0000336280" description="UPF0102 protein TTHA0372">
    <location>
        <begin position="1"/>
        <end position="112"/>
    </location>
</feature>
<comment type="similarity">
    <text evidence="1">Belongs to the UPF0102 family.</text>
</comment>
<gene>
    <name type="ordered locus">TTHA0372</name>
</gene>
<keyword id="KW-1185">Reference proteome</keyword>
<name>Y372_THET8</name>
<evidence type="ECO:0000255" key="1">
    <source>
        <dbReference type="HAMAP-Rule" id="MF_00048"/>
    </source>
</evidence>